<feature type="chain" id="PRO_1000115068" description="Small ribosomal subunit protein uS2">
    <location>
        <begin position="1"/>
        <end position="235"/>
    </location>
</feature>
<organism>
    <name type="scientific">Thermoanaerobacter sp. (strain X514)</name>
    <dbReference type="NCBI Taxonomy" id="399726"/>
    <lineage>
        <taxon>Bacteria</taxon>
        <taxon>Bacillati</taxon>
        <taxon>Bacillota</taxon>
        <taxon>Clostridia</taxon>
        <taxon>Thermoanaerobacterales</taxon>
        <taxon>Thermoanaerobacteraceae</taxon>
        <taxon>Thermoanaerobacter</taxon>
    </lineage>
</organism>
<comment type="similarity">
    <text evidence="1">Belongs to the universal ribosomal protein uS2 family.</text>
</comment>
<sequence length="235" mass="26617">MSVISMKQLLEAGVHFGHQTRRWNPKMAPYIFTERNGIYIIDLQQTVEKLEQAYEFVKKLAMEGGTILFVGTKKQAQDSIKEEAERCGMFYVNQRWLGGTLTNFKTIRGRIQRLKELKKMEEDGTFDVLPKKEVIKLRKEKERLQKFLGGIENMQSLPSALFIVDPKKEAIAVAEARSLEIPIVAIVDTNCDPELIDYPIPGNDDAIRAVKLITSKIADAVIEGNQGEQFAASEE</sequence>
<accession>B0K1P9</accession>
<evidence type="ECO:0000255" key="1">
    <source>
        <dbReference type="HAMAP-Rule" id="MF_00291"/>
    </source>
</evidence>
<evidence type="ECO:0000305" key="2"/>
<protein>
    <recommendedName>
        <fullName evidence="1">Small ribosomal subunit protein uS2</fullName>
    </recommendedName>
    <alternativeName>
        <fullName evidence="2">30S ribosomal protein S2</fullName>
    </alternativeName>
</protein>
<reference key="1">
    <citation type="submission" date="2008-01" db="EMBL/GenBank/DDBJ databases">
        <title>Complete sequence of Thermoanaerobacter sp. X514.</title>
        <authorList>
            <consortium name="US DOE Joint Genome Institute"/>
            <person name="Copeland A."/>
            <person name="Lucas S."/>
            <person name="Lapidus A."/>
            <person name="Barry K."/>
            <person name="Glavina del Rio T."/>
            <person name="Dalin E."/>
            <person name="Tice H."/>
            <person name="Pitluck S."/>
            <person name="Bruce D."/>
            <person name="Goodwin L."/>
            <person name="Saunders E."/>
            <person name="Brettin T."/>
            <person name="Detter J.C."/>
            <person name="Han C."/>
            <person name="Schmutz J."/>
            <person name="Larimer F."/>
            <person name="Land M."/>
            <person name="Hauser L."/>
            <person name="Kyrpides N."/>
            <person name="Kim E."/>
            <person name="Hemme C."/>
            <person name="Fields M.W."/>
            <person name="He Z."/>
            <person name="Zhou J."/>
            <person name="Richardson P."/>
        </authorList>
    </citation>
    <scope>NUCLEOTIDE SEQUENCE [LARGE SCALE GENOMIC DNA]</scope>
    <source>
        <strain>X514</strain>
    </source>
</reference>
<name>RS2_THEPX</name>
<gene>
    <name evidence="1" type="primary">rpsB</name>
    <name type="ordered locus">Teth514_1661</name>
</gene>
<proteinExistence type="inferred from homology"/>
<dbReference type="EMBL" id="CP000923">
    <property type="protein sequence ID" value="ABY92947.1"/>
    <property type="molecule type" value="Genomic_DNA"/>
</dbReference>
<dbReference type="RefSeq" id="WP_003869145.1">
    <property type="nucleotide sequence ID" value="NC_010320.1"/>
</dbReference>
<dbReference type="SMR" id="B0K1P9"/>
<dbReference type="KEGG" id="tex:Teth514_1661"/>
<dbReference type="HOGENOM" id="CLU_040318_1_2_9"/>
<dbReference type="Proteomes" id="UP000002155">
    <property type="component" value="Chromosome"/>
</dbReference>
<dbReference type="GO" id="GO:0022627">
    <property type="term" value="C:cytosolic small ribosomal subunit"/>
    <property type="evidence" value="ECO:0007669"/>
    <property type="project" value="TreeGrafter"/>
</dbReference>
<dbReference type="GO" id="GO:0003735">
    <property type="term" value="F:structural constituent of ribosome"/>
    <property type="evidence" value="ECO:0007669"/>
    <property type="project" value="InterPro"/>
</dbReference>
<dbReference type="GO" id="GO:0006412">
    <property type="term" value="P:translation"/>
    <property type="evidence" value="ECO:0007669"/>
    <property type="project" value="UniProtKB-UniRule"/>
</dbReference>
<dbReference type="CDD" id="cd01425">
    <property type="entry name" value="RPS2"/>
    <property type="match status" value="1"/>
</dbReference>
<dbReference type="FunFam" id="1.10.287.610:FF:000001">
    <property type="entry name" value="30S ribosomal protein S2"/>
    <property type="match status" value="1"/>
</dbReference>
<dbReference type="Gene3D" id="3.40.50.10490">
    <property type="entry name" value="Glucose-6-phosphate isomerase like protein, domain 1"/>
    <property type="match status" value="1"/>
</dbReference>
<dbReference type="Gene3D" id="1.10.287.610">
    <property type="entry name" value="Helix hairpin bin"/>
    <property type="match status" value="1"/>
</dbReference>
<dbReference type="HAMAP" id="MF_00291_B">
    <property type="entry name" value="Ribosomal_uS2_B"/>
    <property type="match status" value="1"/>
</dbReference>
<dbReference type="InterPro" id="IPR001865">
    <property type="entry name" value="Ribosomal_uS2"/>
</dbReference>
<dbReference type="InterPro" id="IPR005706">
    <property type="entry name" value="Ribosomal_uS2_bac/mit/plastid"/>
</dbReference>
<dbReference type="InterPro" id="IPR018130">
    <property type="entry name" value="Ribosomal_uS2_CS"/>
</dbReference>
<dbReference type="InterPro" id="IPR023591">
    <property type="entry name" value="Ribosomal_uS2_flav_dom_sf"/>
</dbReference>
<dbReference type="NCBIfam" id="TIGR01011">
    <property type="entry name" value="rpsB_bact"/>
    <property type="match status" value="1"/>
</dbReference>
<dbReference type="PANTHER" id="PTHR12534">
    <property type="entry name" value="30S RIBOSOMAL PROTEIN S2 PROKARYOTIC AND ORGANELLAR"/>
    <property type="match status" value="1"/>
</dbReference>
<dbReference type="PANTHER" id="PTHR12534:SF0">
    <property type="entry name" value="SMALL RIBOSOMAL SUBUNIT PROTEIN US2M"/>
    <property type="match status" value="1"/>
</dbReference>
<dbReference type="Pfam" id="PF00318">
    <property type="entry name" value="Ribosomal_S2"/>
    <property type="match status" value="1"/>
</dbReference>
<dbReference type="PRINTS" id="PR00395">
    <property type="entry name" value="RIBOSOMALS2"/>
</dbReference>
<dbReference type="SUPFAM" id="SSF52313">
    <property type="entry name" value="Ribosomal protein S2"/>
    <property type="match status" value="1"/>
</dbReference>
<dbReference type="PROSITE" id="PS00962">
    <property type="entry name" value="RIBOSOMAL_S2_1"/>
    <property type="match status" value="1"/>
</dbReference>
<keyword id="KW-0687">Ribonucleoprotein</keyword>
<keyword id="KW-0689">Ribosomal protein</keyword>